<dbReference type="EC" id="2.5.1.108" evidence="2"/>
<dbReference type="EMBL" id="AAEY01000005">
    <property type="protein sequence ID" value="EAL22955.1"/>
    <property type="molecule type" value="Genomic_DNA"/>
</dbReference>
<dbReference type="RefSeq" id="XP_777602.1">
    <property type="nucleotide sequence ID" value="XM_772509.1"/>
</dbReference>
<dbReference type="SMR" id="P0CN19"/>
<dbReference type="EnsemblFungi" id="AAW41237">
    <property type="protein sequence ID" value="AAW41237"/>
    <property type="gene ID" value="CNA07400"/>
</dbReference>
<dbReference type="GeneID" id="4933989"/>
<dbReference type="KEGG" id="cnb:CNBA7230"/>
<dbReference type="VEuPathDB" id="FungiDB:CNBA7230"/>
<dbReference type="HOGENOM" id="CLU_037146_1_1_1"/>
<dbReference type="OrthoDB" id="6747at5206"/>
<dbReference type="UniPathway" id="UPA00559"/>
<dbReference type="GO" id="GO:0120513">
    <property type="term" value="C:2-(3-amino-3-carboxypropyl)histidine synthase complex"/>
    <property type="evidence" value="ECO:0000250"/>
    <property type="project" value="UniProtKB"/>
</dbReference>
<dbReference type="GO" id="GO:0005737">
    <property type="term" value="C:cytoplasm"/>
    <property type="evidence" value="ECO:0007669"/>
    <property type="project" value="UniProtKB-SubCell"/>
</dbReference>
<dbReference type="GO" id="GO:0090560">
    <property type="term" value="F:2-(3-amino-3-carboxypropyl)histidine synthase activity"/>
    <property type="evidence" value="ECO:0007669"/>
    <property type="project" value="UniProtKB-EC"/>
</dbReference>
<dbReference type="GO" id="GO:0051539">
    <property type="term" value="F:4 iron, 4 sulfur cluster binding"/>
    <property type="evidence" value="ECO:0000250"/>
    <property type="project" value="UniProtKB"/>
</dbReference>
<dbReference type="GO" id="GO:0046872">
    <property type="term" value="F:metal ion binding"/>
    <property type="evidence" value="ECO:0007669"/>
    <property type="project" value="UniProtKB-KW"/>
</dbReference>
<dbReference type="GO" id="GO:0017183">
    <property type="term" value="P:protein histidyl modification to diphthamide"/>
    <property type="evidence" value="ECO:0000250"/>
    <property type="project" value="UniProtKB"/>
</dbReference>
<dbReference type="FunFam" id="3.40.50.11840:FF:000001">
    <property type="entry name" value="2-(3-amino-3-carboxypropyl)histidine synthase subunit 1"/>
    <property type="match status" value="1"/>
</dbReference>
<dbReference type="FunFam" id="3.40.50.11850:FF:000006">
    <property type="entry name" value="2-(3-amino-3-carboxypropyl)histidine synthase subunit 1"/>
    <property type="match status" value="1"/>
</dbReference>
<dbReference type="Gene3D" id="3.40.50.11840">
    <property type="entry name" value="Diphthamide synthesis DPH1/DPH2 domain 1"/>
    <property type="match status" value="1"/>
</dbReference>
<dbReference type="Gene3D" id="3.40.50.11850">
    <property type="entry name" value="Diphthamide synthesis DPH1/DPH2 domain 2"/>
    <property type="match status" value="1"/>
</dbReference>
<dbReference type="Gene3D" id="3.40.50.11860">
    <property type="entry name" value="Diphthamide synthesis DPH1/DPH2 domain 3"/>
    <property type="match status" value="1"/>
</dbReference>
<dbReference type="InterPro" id="IPR016435">
    <property type="entry name" value="DPH1/DPH2"/>
</dbReference>
<dbReference type="InterPro" id="IPR042263">
    <property type="entry name" value="DPH1/DPH2_1"/>
</dbReference>
<dbReference type="InterPro" id="IPR042264">
    <property type="entry name" value="DPH1/DPH2_2"/>
</dbReference>
<dbReference type="InterPro" id="IPR042265">
    <property type="entry name" value="DPH1/DPH2_3"/>
</dbReference>
<dbReference type="InterPro" id="IPR035435">
    <property type="entry name" value="DPH1/DPH2_euk_archaea"/>
</dbReference>
<dbReference type="NCBIfam" id="TIGR00322">
    <property type="entry name" value="diphth2_R"/>
    <property type="match status" value="2"/>
</dbReference>
<dbReference type="PANTHER" id="PTHR10762:SF1">
    <property type="entry name" value="2-(3-AMINO-3-CARBOXYPROPYL)HISTIDINE SYNTHASE SUBUNIT 1"/>
    <property type="match status" value="1"/>
</dbReference>
<dbReference type="PANTHER" id="PTHR10762">
    <property type="entry name" value="DIPHTHAMIDE BIOSYNTHESIS PROTEIN"/>
    <property type="match status" value="1"/>
</dbReference>
<dbReference type="Pfam" id="PF01866">
    <property type="entry name" value="Diphthamide_syn"/>
    <property type="match status" value="2"/>
</dbReference>
<dbReference type="PIRSF" id="PIRSF004967">
    <property type="entry name" value="DPH1"/>
    <property type="match status" value="1"/>
</dbReference>
<dbReference type="SFLD" id="SFLDS00032">
    <property type="entry name" value="Radical_SAM_3-amino-3-carboxyp"/>
    <property type="match status" value="1"/>
</dbReference>
<organism>
    <name type="scientific">Cryptococcus neoformans var. neoformans serotype D (strain B-3501A)</name>
    <name type="common">Filobasidiella neoformans</name>
    <dbReference type="NCBI Taxonomy" id="283643"/>
    <lineage>
        <taxon>Eukaryota</taxon>
        <taxon>Fungi</taxon>
        <taxon>Dikarya</taxon>
        <taxon>Basidiomycota</taxon>
        <taxon>Agaricomycotina</taxon>
        <taxon>Tremellomycetes</taxon>
        <taxon>Tremellales</taxon>
        <taxon>Cryptococcaceae</taxon>
        <taxon>Cryptococcus</taxon>
        <taxon>Cryptococcus neoformans species complex</taxon>
    </lineage>
</organism>
<name>DPH1_CRYNB</name>
<sequence length="529" mass="57461">MPVPVDDSTAVLEPTEGIERPTKPAVKSRKRFVGSSKAATSRPVVRRVANQVPDDILHDKELNAAIAALPGNYNFEIHKTIYHIRRDNVQSVALQMPEGLMMYGCAIADIIERFTGALPMMLADVTYGACCIDDYTAKEMGAEMIVHYGHSCLIPVSQTTLKTLYVFVEIGIDTPHLSLSVRRNFPSSRSAFQRLILGAGEAAPGGKVPIALESTDESAQATPDLSTNDLPTRLALVSTIQFVAATQALRADLETAMPPLEKGEIEQEEEGMVAKVKRGDIGVWRGKYEVTVPQAKPLSPGEVLGCTAPKLNDVDALIYVGDGRFHLESIMIANPTVPAFRYDPYSKKFTREVYDHTEMRGLRGEAVKAARKNLDDQGSGSWAVLLGTLGRQGSLAVLKSIQNSLPADSLPPLLLLLSELSPAKLALLPNSQISTFIQTSCPRLSIDWGYAFSRPLLSPYEASVAVGRVKGWGGLSLDNGKEGGKLEGEGDYPMDFYADNSLGDWTPRHNPPRPRPARVRPQAQGCAQD</sequence>
<protein>
    <recommendedName>
        <fullName evidence="4">2-(3-amino-3-carboxypropyl)histidine synthase subunit 1</fullName>
        <ecNumber evidence="2">2.5.1.108</ecNumber>
    </recommendedName>
    <alternativeName>
        <fullName>Diphthamide biosynthesis protein 1</fullName>
    </alternativeName>
    <alternativeName>
        <fullName evidence="4">Diphtheria toxin resistance protein 1</fullName>
    </alternativeName>
    <alternativeName>
        <fullName evidence="4">S-adenosyl-L-methionine:L-histidine 3-amino-3-carboxypropyltransferase 1</fullName>
    </alternativeName>
</protein>
<gene>
    <name type="primary">DPH1</name>
    <name type="ordered locus">CNBA7230</name>
</gene>
<proteinExistence type="inferred from homology"/>
<comment type="function">
    <text evidence="2">Catalyzes the first step of diphthamide biosynthesis, a post-translational modification of histidine which occurs in elongation factor 2. DPH1 and DPH2 transfer a 3-amino-3-carboxypropyl (ACP) group from S-adenosyl-L-methionine (SAM) to a histidine residue, the reaction is assisted by a reduction system comprising DPH3 and a NADH-dependent reductase, predominantly CBR1.</text>
</comment>
<comment type="catalytic activity">
    <reaction evidence="2">
        <text>L-histidyl-[translation elongation factor 2] + S-adenosyl-L-methionine = 2-[(3S)-amino-3-carboxypropyl]-L-histidyl-[translation elongation factor 2] + S-methyl-5'-thioadenosine + H(+)</text>
        <dbReference type="Rhea" id="RHEA:36783"/>
        <dbReference type="Rhea" id="RHEA-COMP:9748"/>
        <dbReference type="Rhea" id="RHEA-COMP:9749"/>
        <dbReference type="ChEBI" id="CHEBI:15378"/>
        <dbReference type="ChEBI" id="CHEBI:17509"/>
        <dbReference type="ChEBI" id="CHEBI:29979"/>
        <dbReference type="ChEBI" id="CHEBI:59789"/>
        <dbReference type="ChEBI" id="CHEBI:73995"/>
        <dbReference type="EC" id="2.5.1.108"/>
    </reaction>
</comment>
<comment type="cofactor">
    <cofactor evidence="2">
        <name>[4Fe-4S] cluster</name>
        <dbReference type="ChEBI" id="CHEBI:49883"/>
    </cofactor>
    <text evidence="2">Binds 1 [4Fe-4S] cluster per subunit. The cluster is coordinated with 3 cysteines and an exchangeable S-adenosyl-L-methionine.</text>
</comment>
<comment type="pathway">
    <text>Protein modification; peptidyl-diphthamide biosynthesis.</text>
</comment>
<comment type="subunit">
    <text evidence="2">Component of the 2-(3-amino-3-carboxypropyl)histidine synthase complex composed of DPH1, DPH2, DPH3 and a NADH-dependent reductase, predominantly CBR1.</text>
</comment>
<comment type="subcellular location">
    <subcellularLocation>
        <location evidence="2">Cytoplasm</location>
    </subcellularLocation>
</comment>
<comment type="similarity">
    <text evidence="4">Belongs to the DPH1/DPH2 family. DPH1 subfamily.</text>
</comment>
<accession>P0CN19</accession>
<accession>Q55YW3</accession>
<accession>Q5KN81</accession>
<reference key="1">
    <citation type="journal article" date="2005" name="Science">
        <title>The genome of the basidiomycetous yeast and human pathogen Cryptococcus neoformans.</title>
        <authorList>
            <person name="Loftus B.J."/>
            <person name="Fung E."/>
            <person name="Roncaglia P."/>
            <person name="Rowley D."/>
            <person name="Amedeo P."/>
            <person name="Bruno D."/>
            <person name="Vamathevan J."/>
            <person name="Miranda M."/>
            <person name="Anderson I.J."/>
            <person name="Fraser J.A."/>
            <person name="Allen J.E."/>
            <person name="Bosdet I.E."/>
            <person name="Brent M.R."/>
            <person name="Chiu R."/>
            <person name="Doering T.L."/>
            <person name="Donlin M.J."/>
            <person name="D'Souza C.A."/>
            <person name="Fox D.S."/>
            <person name="Grinberg V."/>
            <person name="Fu J."/>
            <person name="Fukushima M."/>
            <person name="Haas B.J."/>
            <person name="Huang J.C."/>
            <person name="Janbon G."/>
            <person name="Jones S.J.M."/>
            <person name="Koo H.L."/>
            <person name="Krzywinski M.I."/>
            <person name="Kwon-Chung K.J."/>
            <person name="Lengeler K.B."/>
            <person name="Maiti R."/>
            <person name="Marra M.A."/>
            <person name="Marra R.E."/>
            <person name="Mathewson C.A."/>
            <person name="Mitchell T.G."/>
            <person name="Pertea M."/>
            <person name="Riggs F.R."/>
            <person name="Salzberg S.L."/>
            <person name="Schein J.E."/>
            <person name="Shvartsbeyn A."/>
            <person name="Shin H."/>
            <person name="Shumway M."/>
            <person name="Specht C.A."/>
            <person name="Suh B.B."/>
            <person name="Tenney A."/>
            <person name="Utterback T.R."/>
            <person name="Wickes B.L."/>
            <person name="Wortman J.R."/>
            <person name="Wye N.H."/>
            <person name="Kronstad J.W."/>
            <person name="Lodge J.K."/>
            <person name="Heitman J."/>
            <person name="Davis R.W."/>
            <person name="Fraser C.M."/>
            <person name="Hyman R.W."/>
        </authorList>
    </citation>
    <scope>NUCLEOTIDE SEQUENCE [LARGE SCALE GENOMIC DNA]</scope>
    <source>
        <strain>B-3501A</strain>
    </source>
</reference>
<feature type="chain" id="PRO_0000410063" description="2-(3-amino-3-carboxypropyl)histidine synthase subunit 1">
    <location>
        <begin position="1"/>
        <end position="529"/>
    </location>
</feature>
<feature type="region of interest" description="Disordered" evidence="3">
    <location>
        <begin position="1"/>
        <end position="38"/>
    </location>
</feature>
<feature type="region of interest" description="Disordered" evidence="3">
    <location>
        <begin position="498"/>
        <end position="529"/>
    </location>
</feature>
<feature type="binding site" evidence="1">
    <location>
        <position position="130"/>
    </location>
    <ligand>
        <name>[4Fe-4S] cluster</name>
        <dbReference type="ChEBI" id="CHEBI:49883"/>
    </ligand>
</feature>
<feature type="binding site" evidence="1">
    <location>
        <position position="306"/>
    </location>
    <ligand>
        <name>[4Fe-4S] cluster</name>
        <dbReference type="ChEBI" id="CHEBI:49883"/>
    </ligand>
</feature>
<feature type="binding site" evidence="1">
    <location>
        <position position="441"/>
    </location>
    <ligand>
        <name>[4Fe-4S] cluster</name>
        <dbReference type="ChEBI" id="CHEBI:49883"/>
    </ligand>
</feature>
<keyword id="KW-0963">Cytoplasm</keyword>
<keyword id="KW-0408">Iron</keyword>
<keyword id="KW-0411">Iron-sulfur</keyword>
<keyword id="KW-0479">Metal-binding</keyword>
<keyword id="KW-0949">S-adenosyl-L-methionine</keyword>
<keyword id="KW-0808">Transferase</keyword>
<evidence type="ECO:0000250" key="1">
    <source>
        <dbReference type="UniProtKB" id="O58832"/>
    </source>
</evidence>
<evidence type="ECO:0000250" key="2">
    <source>
        <dbReference type="UniProtKB" id="P40487"/>
    </source>
</evidence>
<evidence type="ECO:0000256" key="3">
    <source>
        <dbReference type="SAM" id="MobiDB-lite"/>
    </source>
</evidence>
<evidence type="ECO:0000305" key="4"/>